<accession>O55727</accession>
<name>111R_IIV6</name>
<reference key="1">
    <citation type="journal article" date="2001" name="Virology">
        <title>Analysis of the first complete DNA sequence of an invertebrate iridovirus: coding strategy of the genome of Chilo iridescent virus.</title>
        <authorList>
            <person name="Jakob N.J."/>
            <person name="Mueller K."/>
            <person name="Bahr U."/>
            <person name="Darai G."/>
        </authorList>
    </citation>
    <scope>NUCLEOTIDE SEQUENCE [LARGE SCALE GENOMIC DNA]</scope>
</reference>
<reference key="2">
    <citation type="journal article" date="2007" name="Virol. J.">
        <title>Comparative genomic analysis of the family Iridoviridae: re-annotating and defining the core set of iridovirus genes.</title>
        <authorList>
            <person name="Eaton H.E."/>
            <person name="Metcalf J."/>
            <person name="Penny E."/>
            <person name="Tcherepanov V."/>
            <person name="Upton C."/>
            <person name="Brunetti C.R."/>
        </authorList>
    </citation>
    <scope>GENOME REANNOTATION</scope>
</reference>
<dbReference type="EMBL" id="AF303741">
    <property type="protein sequence ID" value="AAB94438.1"/>
    <property type="molecule type" value="Genomic_DNA"/>
</dbReference>
<dbReference type="PIR" id="T03064">
    <property type="entry name" value="T03064"/>
</dbReference>
<dbReference type="RefSeq" id="NP_149574.1">
    <property type="nucleotide sequence ID" value="NC_003038.1"/>
</dbReference>
<dbReference type="KEGG" id="vg:1733369"/>
<dbReference type="OrthoDB" id="34684at10239"/>
<dbReference type="Proteomes" id="UP000001359">
    <property type="component" value="Genome"/>
</dbReference>
<protein>
    <recommendedName>
        <fullName>Uncharacterized protein 111R</fullName>
    </recommendedName>
</protein>
<evidence type="ECO:0000255" key="1"/>
<feature type="signal peptide" evidence="1">
    <location>
        <begin position="1"/>
        <end position="23"/>
    </location>
</feature>
<feature type="chain" id="PRO_0000377992" description="Uncharacterized protein 111R">
    <location>
        <begin position="24"/>
        <end position="175"/>
    </location>
</feature>
<organism>
    <name type="scientific">Invertebrate iridescent virus 6</name>
    <name type="common">IIV-6</name>
    <name type="synonym">Chilo iridescent virus</name>
    <dbReference type="NCBI Taxonomy" id="176652"/>
    <lineage>
        <taxon>Viruses</taxon>
        <taxon>Varidnaviria</taxon>
        <taxon>Bamfordvirae</taxon>
        <taxon>Nucleocytoviricota</taxon>
        <taxon>Megaviricetes</taxon>
        <taxon>Pimascovirales</taxon>
        <taxon>Iridoviridae</taxon>
        <taxon>Betairidovirinae</taxon>
        <taxon>Iridovirus</taxon>
    </lineage>
</organism>
<keyword id="KW-1185">Reference proteome</keyword>
<keyword id="KW-0732">Signal</keyword>
<gene>
    <name type="ORF">IIV6-111R</name>
</gene>
<sequence>MILVLLLILIAFLYIYFPSSLNQKNQELSTLSKNLINNYSFVPKTFKQKIHIIIPLKSNVDNIIHNILKQTEKVDIMTIIVPKEYENKLKNGKNSLCKLLRDTCIIQISGGYGMLSKERETGTILVYVNNLFSDPNTLKNMLNRISKSTKKIFYFSDATVIDNSIPIGIDDAYKL</sequence>
<organismHost>
    <name type="scientific">Acheta domesticus</name>
    <name type="common">House cricket</name>
    <dbReference type="NCBI Taxonomy" id="6997"/>
</organismHost>
<organismHost>
    <name type="scientific">Chilo suppressalis</name>
    <name type="common">Asiatic rice borer moth</name>
    <dbReference type="NCBI Taxonomy" id="168631"/>
</organismHost>
<organismHost>
    <name type="scientific">Gryllus bimaculatus</name>
    <name type="common">Two-spotted cricket</name>
    <dbReference type="NCBI Taxonomy" id="6999"/>
</organismHost>
<organismHost>
    <name type="scientific">Gryllus campestris</name>
    <dbReference type="NCBI Taxonomy" id="58607"/>
</organismHost>
<organismHost>
    <name type="scientific">Spodoptera frugiperda</name>
    <name type="common">Fall armyworm</name>
    <dbReference type="NCBI Taxonomy" id="7108"/>
</organismHost>
<proteinExistence type="inferred from homology"/>